<evidence type="ECO:0000255" key="1">
    <source>
        <dbReference type="HAMAP-Rule" id="MF_01382"/>
    </source>
</evidence>
<evidence type="ECO:0000256" key="2">
    <source>
        <dbReference type="SAM" id="MobiDB-lite"/>
    </source>
</evidence>
<dbReference type="EC" id="7.4.2.8" evidence="1"/>
<dbReference type="EMBL" id="CP000860">
    <property type="protein sequence ID" value="ACA60569.1"/>
    <property type="molecule type" value="Genomic_DNA"/>
</dbReference>
<dbReference type="RefSeq" id="WP_012303144.1">
    <property type="nucleotide sequence ID" value="NC_010424.1"/>
</dbReference>
<dbReference type="SMR" id="B1I6D8"/>
<dbReference type="STRING" id="477974.Daud_2080"/>
<dbReference type="KEGG" id="dau:Daud_2080"/>
<dbReference type="eggNOG" id="COG0653">
    <property type="taxonomic scope" value="Bacteria"/>
</dbReference>
<dbReference type="HOGENOM" id="CLU_005314_3_0_9"/>
<dbReference type="OrthoDB" id="9805579at2"/>
<dbReference type="Proteomes" id="UP000008544">
    <property type="component" value="Chromosome"/>
</dbReference>
<dbReference type="GO" id="GO:0031522">
    <property type="term" value="C:cell envelope Sec protein transport complex"/>
    <property type="evidence" value="ECO:0007669"/>
    <property type="project" value="TreeGrafter"/>
</dbReference>
<dbReference type="GO" id="GO:0005829">
    <property type="term" value="C:cytosol"/>
    <property type="evidence" value="ECO:0007669"/>
    <property type="project" value="TreeGrafter"/>
</dbReference>
<dbReference type="GO" id="GO:0005886">
    <property type="term" value="C:plasma membrane"/>
    <property type="evidence" value="ECO:0007669"/>
    <property type="project" value="UniProtKB-SubCell"/>
</dbReference>
<dbReference type="GO" id="GO:0005524">
    <property type="term" value="F:ATP binding"/>
    <property type="evidence" value="ECO:0007669"/>
    <property type="project" value="UniProtKB-UniRule"/>
</dbReference>
<dbReference type="GO" id="GO:0046872">
    <property type="term" value="F:metal ion binding"/>
    <property type="evidence" value="ECO:0007669"/>
    <property type="project" value="UniProtKB-KW"/>
</dbReference>
<dbReference type="GO" id="GO:0008564">
    <property type="term" value="F:protein-exporting ATPase activity"/>
    <property type="evidence" value="ECO:0007669"/>
    <property type="project" value="UniProtKB-EC"/>
</dbReference>
<dbReference type="GO" id="GO:0065002">
    <property type="term" value="P:intracellular protein transmembrane transport"/>
    <property type="evidence" value="ECO:0007669"/>
    <property type="project" value="UniProtKB-UniRule"/>
</dbReference>
<dbReference type="GO" id="GO:0017038">
    <property type="term" value="P:protein import"/>
    <property type="evidence" value="ECO:0007669"/>
    <property type="project" value="InterPro"/>
</dbReference>
<dbReference type="GO" id="GO:0006605">
    <property type="term" value="P:protein targeting"/>
    <property type="evidence" value="ECO:0007669"/>
    <property type="project" value="UniProtKB-UniRule"/>
</dbReference>
<dbReference type="GO" id="GO:0043952">
    <property type="term" value="P:protein transport by the Sec complex"/>
    <property type="evidence" value="ECO:0007669"/>
    <property type="project" value="TreeGrafter"/>
</dbReference>
<dbReference type="CDD" id="cd17928">
    <property type="entry name" value="DEXDc_SecA"/>
    <property type="match status" value="1"/>
</dbReference>
<dbReference type="CDD" id="cd18803">
    <property type="entry name" value="SF2_C_secA"/>
    <property type="match status" value="1"/>
</dbReference>
<dbReference type="FunFam" id="3.40.50.300:FF:000113">
    <property type="entry name" value="Preprotein translocase subunit SecA"/>
    <property type="match status" value="1"/>
</dbReference>
<dbReference type="FunFam" id="1.10.3060.10:FF:000003">
    <property type="entry name" value="Protein translocase subunit SecA"/>
    <property type="match status" value="1"/>
</dbReference>
<dbReference type="FunFam" id="3.40.50.300:FF:000334">
    <property type="entry name" value="Protein translocase subunit SecA"/>
    <property type="match status" value="1"/>
</dbReference>
<dbReference type="FunFam" id="3.90.1440.10:FF:000002">
    <property type="entry name" value="Protein translocase subunit SecA"/>
    <property type="match status" value="1"/>
</dbReference>
<dbReference type="Gene3D" id="1.10.3060.10">
    <property type="entry name" value="Helical scaffold and wing domains of SecA"/>
    <property type="match status" value="1"/>
</dbReference>
<dbReference type="Gene3D" id="3.40.50.300">
    <property type="entry name" value="P-loop containing nucleotide triphosphate hydrolases"/>
    <property type="match status" value="2"/>
</dbReference>
<dbReference type="Gene3D" id="3.90.1440.10">
    <property type="entry name" value="SecA, preprotein cross-linking domain"/>
    <property type="match status" value="1"/>
</dbReference>
<dbReference type="HAMAP" id="MF_01382">
    <property type="entry name" value="SecA"/>
    <property type="match status" value="1"/>
</dbReference>
<dbReference type="InterPro" id="IPR014001">
    <property type="entry name" value="Helicase_ATP-bd"/>
</dbReference>
<dbReference type="InterPro" id="IPR027417">
    <property type="entry name" value="P-loop_NTPase"/>
</dbReference>
<dbReference type="InterPro" id="IPR004027">
    <property type="entry name" value="SEC_C_motif"/>
</dbReference>
<dbReference type="InterPro" id="IPR000185">
    <property type="entry name" value="SecA"/>
</dbReference>
<dbReference type="InterPro" id="IPR020937">
    <property type="entry name" value="SecA_CS"/>
</dbReference>
<dbReference type="InterPro" id="IPR011115">
    <property type="entry name" value="SecA_DEAD"/>
</dbReference>
<dbReference type="InterPro" id="IPR014018">
    <property type="entry name" value="SecA_motor_DEAD"/>
</dbReference>
<dbReference type="InterPro" id="IPR011130">
    <property type="entry name" value="SecA_preprotein_X-link_dom"/>
</dbReference>
<dbReference type="InterPro" id="IPR044722">
    <property type="entry name" value="SecA_SF2_C"/>
</dbReference>
<dbReference type="InterPro" id="IPR011116">
    <property type="entry name" value="SecA_Wing/Scaffold"/>
</dbReference>
<dbReference type="InterPro" id="IPR036266">
    <property type="entry name" value="SecA_Wing/Scaffold_sf"/>
</dbReference>
<dbReference type="InterPro" id="IPR036670">
    <property type="entry name" value="SecA_X-link_sf"/>
</dbReference>
<dbReference type="NCBIfam" id="NF009538">
    <property type="entry name" value="PRK12904.1"/>
    <property type="match status" value="1"/>
</dbReference>
<dbReference type="NCBIfam" id="TIGR00963">
    <property type="entry name" value="secA"/>
    <property type="match status" value="1"/>
</dbReference>
<dbReference type="PANTHER" id="PTHR30612:SF0">
    <property type="entry name" value="CHLOROPLAST PROTEIN-TRANSPORTING ATPASE"/>
    <property type="match status" value="1"/>
</dbReference>
<dbReference type="PANTHER" id="PTHR30612">
    <property type="entry name" value="SECA INNER MEMBRANE COMPONENT OF SEC PROTEIN SECRETION SYSTEM"/>
    <property type="match status" value="1"/>
</dbReference>
<dbReference type="Pfam" id="PF21090">
    <property type="entry name" value="P-loop_SecA"/>
    <property type="match status" value="1"/>
</dbReference>
<dbReference type="Pfam" id="PF02810">
    <property type="entry name" value="SEC-C"/>
    <property type="match status" value="1"/>
</dbReference>
<dbReference type="Pfam" id="PF07517">
    <property type="entry name" value="SecA_DEAD"/>
    <property type="match status" value="1"/>
</dbReference>
<dbReference type="Pfam" id="PF01043">
    <property type="entry name" value="SecA_PP_bind"/>
    <property type="match status" value="1"/>
</dbReference>
<dbReference type="Pfam" id="PF07516">
    <property type="entry name" value="SecA_SW"/>
    <property type="match status" value="1"/>
</dbReference>
<dbReference type="PRINTS" id="PR00906">
    <property type="entry name" value="SECA"/>
</dbReference>
<dbReference type="SMART" id="SM00957">
    <property type="entry name" value="SecA_DEAD"/>
    <property type="match status" value="1"/>
</dbReference>
<dbReference type="SMART" id="SM00958">
    <property type="entry name" value="SecA_PP_bind"/>
    <property type="match status" value="1"/>
</dbReference>
<dbReference type="SUPFAM" id="SSF81886">
    <property type="entry name" value="Helical scaffold and wing domains of SecA"/>
    <property type="match status" value="1"/>
</dbReference>
<dbReference type="SUPFAM" id="SSF52540">
    <property type="entry name" value="P-loop containing nucleoside triphosphate hydrolases"/>
    <property type="match status" value="2"/>
</dbReference>
<dbReference type="SUPFAM" id="SSF81767">
    <property type="entry name" value="Pre-protein crosslinking domain of SecA"/>
    <property type="match status" value="1"/>
</dbReference>
<dbReference type="PROSITE" id="PS01312">
    <property type="entry name" value="SECA"/>
    <property type="match status" value="1"/>
</dbReference>
<dbReference type="PROSITE" id="PS51196">
    <property type="entry name" value="SECA_MOTOR_DEAD"/>
    <property type="match status" value="1"/>
</dbReference>
<protein>
    <recommendedName>
        <fullName evidence="1">Protein translocase subunit SecA</fullName>
        <ecNumber evidence="1">7.4.2.8</ecNumber>
    </recommendedName>
</protein>
<keyword id="KW-0067">ATP-binding</keyword>
<keyword id="KW-1003">Cell membrane</keyword>
<keyword id="KW-0963">Cytoplasm</keyword>
<keyword id="KW-0472">Membrane</keyword>
<keyword id="KW-0479">Metal-binding</keyword>
<keyword id="KW-0547">Nucleotide-binding</keyword>
<keyword id="KW-0653">Protein transport</keyword>
<keyword id="KW-1185">Reference proteome</keyword>
<keyword id="KW-1278">Translocase</keyword>
<keyword id="KW-0811">Translocation</keyword>
<keyword id="KW-0813">Transport</keyword>
<keyword id="KW-0862">Zinc</keyword>
<sequence>MLGFLKNFLDDNAREVKKLQRVVTAVNELEPRIEKLTDAELQAKTPALRERLEAGAPLDDLLPEAFAVVREVSRRVLDMRHFDVQIMGGVVLHQGKIAEMKTGEGKTLVATLPAYLNALTGRGVHIVTVNDYLAKRDSEWMGHIYRFLGLSTGLIVHGLDARQRQASYAADVIYGTNNEFGFDYLRDNMAMYPRDLVQRDLYYAIVDEVDSILIDEARTPLIISGQSGKPTDTYYTMARLVPKLKAETHFAVDEKARTVSLTEEGFARCEELLNIDNLSDPEHEEVLHHLNQALKAHALMKRDRDYVVKDGQVIIVDEFTGRLMFGRRYSDGLHQAIEAKEGVKIERESQTLATITFQNYFRMYEKLAGMTGTADTEAEEFKKIYGLDVVVVPTHKPMIREDLPDAVFKTEEGKFRAVVEEIAARHATGQPVLVGTISIEKSEVLSRMLTRRGIPHQVLNAKYHEKEAEIVAQAGRIGAVTIATNMAGRGTDIMLGGNPSFLALQEMRRRDYPPEVIAEAAEYGPCTEEVAEARRVYRELYAEFKKETDAEHDRVVALGGLFIIGTERHEARRIDNQLRGRCGRQGDPGATQFFVALNDDLLRLFGGDNIAGLMDRLKMDEDAPLEHPLISKSLETAQRRVENRNFSIRKHVLNYDDVINQQRELIYRQRRQVLCGEDLRPVVRQMMEEVAGQAVTAFAPEGVYPEEWNYEGLSEYMTQILPGEKWTVEDLEERLGKKRDDFRREDLRRLFLNEMEQAYAAREAELGAETMREIERVLMLRIVDEKWMDHLDAMDQLREGVGLRAYGQKDPLVEYKFESFDMFQNMIASIQEETVKKLFRVRVVPPQQAERRQVKENLYAAGGDGVKQPVRRDKKVGRNSPCPCGSGKKYKKCCAAKDEQAAG</sequence>
<reference key="1">
    <citation type="submission" date="2007-10" db="EMBL/GenBank/DDBJ databases">
        <title>Complete sequence of chromosome of Desulforudis audaxviator MP104C.</title>
        <authorList>
            <person name="Copeland A."/>
            <person name="Lucas S."/>
            <person name="Lapidus A."/>
            <person name="Barry K."/>
            <person name="Glavina del Rio T."/>
            <person name="Dalin E."/>
            <person name="Tice H."/>
            <person name="Bruce D."/>
            <person name="Pitluck S."/>
            <person name="Lowry S.R."/>
            <person name="Larimer F."/>
            <person name="Land M.L."/>
            <person name="Hauser L."/>
            <person name="Kyrpides N."/>
            <person name="Ivanova N.N."/>
            <person name="Richardson P."/>
        </authorList>
    </citation>
    <scope>NUCLEOTIDE SEQUENCE [LARGE SCALE GENOMIC DNA]</scope>
    <source>
        <strain>MP104C</strain>
    </source>
</reference>
<comment type="function">
    <text evidence="1">Part of the Sec protein translocase complex. Interacts with the SecYEG preprotein conducting channel. Has a central role in coupling the hydrolysis of ATP to the transfer of proteins into and across the cell membrane, serving as an ATP-driven molecular motor driving the stepwise translocation of polypeptide chains across the membrane.</text>
</comment>
<comment type="catalytic activity">
    <reaction evidence="1">
        <text>ATP + H2O + cellular proteinSide 1 = ADP + phosphate + cellular proteinSide 2.</text>
        <dbReference type="EC" id="7.4.2.8"/>
    </reaction>
</comment>
<comment type="cofactor">
    <cofactor evidence="1">
        <name>Zn(2+)</name>
        <dbReference type="ChEBI" id="CHEBI:29105"/>
    </cofactor>
    <text evidence="1">May bind 1 zinc ion per subunit.</text>
</comment>
<comment type="subunit">
    <text evidence="1">Monomer and homodimer. Part of the essential Sec protein translocation apparatus which comprises SecA, SecYEG and auxiliary proteins SecDF. Other proteins may also be involved.</text>
</comment>
<comment type="subcellular location">
    <subcellularLocation>
        <location evidence="1">Cell membrane</location>
        <topology evidence="1">Peripheral membrane protein</topology>
        <orientation evidence="1">Cytoplasmic side</orientation>
    </subcellularLocation>
    <subcellularLocation>
        <location evidence="1">Cytoplasm</location>
    </subcellularLocation>
    <text evidence="1">Distribution is 50-50.</text>
</comment>
<comment type="similarity">
    <text evidence="1">Belongs to the SecA family.</text>
</comment>
<organism>
    <name type="scientific">Desulforudis audaxviator (strain MP104C)</name>
    <dbReference type="NCBI Taxonomy" id="477974"/>
    <lineage>
        <taxon>Bacteria</taxon>
        <taxon>Bacillati</taxon>
        <taxon>Bacillota</taxon>
        <taxon>Clostridia</taxon>
        <taxon>Thermoanaerobacterales</taxon>
        <taxon>Candidatus Desulforudaceae</taxon>
        <taxon>Candidatus Desulforudis</taxon>
    </lineage>
</organism>
<name>SECA_DESAP</name>
<proteinExistence type="inferred from homology"/>
<feature type="chain" id="PRO_1000145003" description="Protein translocase subunit SecA">
    <location>
        <begin position="1"/>
        <end position="903"/>
    </location>
</feature>
<feature type="region of interest" description="Disordered" evidence="2">
    <location>
        <begin position="863"/>
        <end position="890"/>
    </location>
</feature>
<feature type="binding site" evidence="1">
    <location>
        <position position="85"/>
    </location>
    <ligand>
        <name>ATP</name>
        <dbReference type="ChEBI" id="CHEBI:30616"/>
    </ligand>
</feature>
<feature type="binding site" evidence="1">
    <location>
        <begin position="103"/>
        <end position="107"/>
    </location>
    <ligand>
        <name>ATP</name>
        <dbReference type="ChEBI" id="CHEBI:30616"/>
    </ligand>
</feature>
<feature type="binding site" evidence="1">
    <location>
        <position position="492"/>
    </location>
    <ligand>
        <name>ATP</name>
        <dbReference type="ChEBI" id="CHEBI:30616"/>
    </ligand>
</feature>
<feature type="binding site" evidence="1">
    <location>
        <position position="882"/>
    </location>
    <ligand>
        <name>Zn(2+)</name>
        <dbReference type="ChEBI" id="CHEBI:29105"/>
    </ligand>
</feature>
<feature type="binding site" evidence="1">
    <location>
        <position position="884"/>
    </location>
    <ligand>
        <name>Zn(2+)</name>
        <dbReference type="ChEBI" id="CHEBI:29105"/>
    </ligand>
</feature>
<feature type="binding site" evidence="1">
    <location>
        <position position="893"/>
    </location>
    <ligand>
        <name>Zn(2+)</name>
        <dbReference type="ChEBI" id="CHEBI:29105"/>
    </ligand>
</feature>
<feature type="binding site" evidence="1">
    <location>
        <position position="894"/>
    </location>
    <ligand>
        <name>Zn(2+)</name>
        <dbReference type="ChEBI" id="CHEBI:29105"/>
    </ligand>
</feature>
<gene>
    <name evidence="1" type="primary">secA</name>
    <name type="ordered locus">Daud_2080</name>
</gene>
<accession>B1I6D8</accession>